<accession>B5EIQ6</accession>
<keyword id="KW-1185">Reference proteome</keyword>
<keyword id="KW-0808">Transferase</keyword>
<keyword id="KW-0819">tRNA processing</keyword>
<dbReference type="EC" id="2.5.1.-" evidence="1"/>
<dbReference type="EMBL" id="CP001124">
    <property type="protein sequence ID" value="ACH38421.1"/>
    <property type="molecule type" value="Genomic_DNA"/>
</dbReference>
<dbReference type="RefSeq" id="WP_012529833.1">
    <property type="nucleotide sequence ID" value="NC_011146.1"/>
</dbReference>
<dbReference type="SMR" id="B5EIQ6"/>
<dbReference type="STRING" id="404380.Gbem_1402"/>
<dbReference type="KEGG" id="gbm:Gbem_1402"/>
<dbReference type="eggNOG" id="COG0500">
    <property type="taxonomic scope" value="Bacteria"/>
</dbReference>
<dbReference type="HOGENOM" id="CLU_052665_0_0_7"/>
<dbReference type="OrthoDB" id="9765084at2"/>
<dbReference type="Proteomes" id="UP000008825">
    <property type="component" value="Chromosome"/>
</dbReference>
<dbReference type="GO" id="GO:0008168">
    <property type="term" value="F:methyltransferase activity"/>
    <property type="evidence" value="ECO:0007669"/>
    <property type="project" value="TreeGrafter"/>
</dbReference>
<dbReference type="GO" id="GO:0016765">
    <property type="term" value="F:transferase activity, transferring alkyl or aryl (other than methyl) groups"/>
    <property type="evidence" value="ECO:0007669"/>
    <property type="project" value="InterPro"/>
</dbReference>
<dbReference type="GO" id="GO:0002098">
    <property type="term" value="P:tRNA wobble uridine modification"/>
    <property type="evidence" value="ECO:0007669"/>
    <property type="project" value="InterPro"/>
</dbReference>
<dbReference type="CDD" id="cd02440">
    <property type="entry name" value="AdoMet_MTases"/>
    <property type="match status" value="1"/>
</dbReference>
<dbReference type="Gene3D" id="3.40.50.150">
    <property type="entry name" value="Vaccinia Virus protein VP39"/>
    <property type="match status" value="1"/>
</dbReference>
<dbReference type="HAMAP" id="MF_01590">
    <property type="entry name" value="tRNA_carboxymethyltr_CmoB"/>
    <property type="match status" value="1"/>
</dbReference>
<dbReference type="InterPro" id="IPR010017">
    <property type="entry name" value="CmoB"/>
</dbReference>
<dbReference type="InterPro" id="IPR027555">
    <property type="entry name" value="Mo5U34_MeTrfas-like"/>
</dbReference>
<dbReference type="InterPro" id="IPR029063">
    <property type="entry name" value="SAM-dependent_MTases_sf"/>
</dbReference>
<dbReference type="NCBIfam" id="NF011650">
    <property type="entry name" value="PRK15068.1"/>
    <property type="match status" value="1"/>
</dbReference>
<dbReference type="NCBIfam" id="TIGR00452">
    <property type="entry name" value="tRNA 5-methoxyuridine(34)/uridine 5-oxyacetic acid(34) synthase CmoB"/>
    <property type="match status" value="1"/>
</dbReference>
<dbReference type="PANTHER" id="PTHR43464">
    <property type="entry name" value="METHYLTRANSFERASE"/>
    <property type="match status" value="1"/>
</dbReference>
<dbReference type="PANTHER" id="PTHR43464:SF95">
    <property type="entry name" value="TRNA U34 CARBOXYMETHYLTRANSFERASE"/>
    <property type="match status" value="1"/>
</dbReference>
<dbReference type="Pfam" id="PF08003">
    <property type="entry name" value="Methyltransf_9"/>
    <property type="match status" value="1"/>
</dbReference>
<dbReference type="SUPFAM" id="SSF53335">
    <property type="entry name" value="S-adenosyl-L-methionine-dependent methyltransferases"/>
    <property type="match status" value="1"/>
</dbReference>
<comment type="function">
    <text evidence="1">Catalyzes carboxymethyl transfer from carboxy-S-adenosyl-L-methionine (Cx-SAM) to 5-hydroxyuridine (ho5U) to form 5-carboxymethoxyuridine (cmo5U) at position 34 in tRNAs.</text>
</comment>
<comment type="catalytic activity">
    <reaction evidence="1">
        <text>carboxy-S-adenosyl-L-methionine + 5-hydroxyuridine(34) in tRNA = 5-carboxymethoxyuridine(34) in tRNA + S-adenosyl-L-homocysteine + H(+)</text>
        <dbReference type="Rhea" id="RHEA:52848"/>
        <dbReference type="Rhea" id="RHEA-COMP:13381"/>
        <dbReference type="Rhea" id="RHEA-COMP:13383"/>
        <dbReference type="ChEBI" id="CHEBI:15378"/>
        <dbReference type="ChEBI" id="CHEBI:57856"/>
        <dbReference type="ChEBI" id="CHEBI:134278"/>
        <dbReference type="ChEBI" id="CHEBI:136877"/>
        <dbReference type="ChEBI" id="CHEBI:136879"/>
    </reaction>
</comment>
<comment type="subunit">
    <text evidence="1">Homotetramer.</text>
</comment>
<comment type="similarity">
    <text evidence="1">Belongs to the class I-like SAM-binding methyltransferase superfamily. CmoB family.</text>
</comment>
<organism>
    <name type="scientific">Citrifermentans bemidjiense (strain ATCC BAA-1014 / DSM 16622 / JCM 12645 / Bem)</name>
    <name type="common">Geobacter bemidjiensis</name>
    <dbReference type="NCBI Taxonomy" id="404380"/>
    <lineage>
        <taxon>Bacteria</taxon>
        <taxon>Pseudomonadati</taxon>
        <taxon>Thermodesulfobacteriota</taxon>
        <taxon>Desulfuromonadia</taxon>
        <taxon>Geobacterales</taxon>
        <taxon>Geobacteraceae</taxon>
        <taxon>Citrifermentans</taxon>
    </lineage>
</organism>
<gene>
    <name evidence="1" type="primary">cmoB</name>
    <name type="ordered locus">Gbem_1402</name>
</gene>
<name>CMOB_CITBB</name>
<sequence length="323" mass="36907">MSNYDALYRQLAAMGQERWAEQLQATLPDKLALESTAKMAGWQSAMQSLPEISPSRIELLDTVTIGSSDDLGQVDREELMAHLQAFHPWRKGPYNFFGIEIDTEWRSDWKWERLLPHIQPLAGRRVIDVGCGNGYHGWRMRGAGAEFVLGIEPFLLSVQQFQVMQRYLCDPQHHVIPIGIEEVPPNLACFDSVFSMGVLYHRRSPLDHLFELKGCLRPGGELILETLIVEGDRETIFMPPGRYAKMRNVWFIPSIAAMTLWLERCGFTDIACVDTNRTSREEQRSTEWMRFESLADFLDPDDAQKTIEGHPAPLRAIFTATKP</sequence>
<proteinExistence type="inferred from homology"/>
<reference key="1">
    <citation type="submission" date="2008-07" db="EMBL/GenBank/DDBJ databases">
        <title>Complete sequence of Geobacter bemidjiensis BEM.</title>
        <authorList>
            <consortium name="US DOE Joint Genome Institute"/>
            <person name="Lucas S."/>
            <person name="Copeland A."/>
            <person name="Lapidus A."/>
            <person name="Glavina del Rio T."/>
            <person name="Dalin E."/>
            <person name="Tice H."/>
            <person name="Bruce D."/>
            <person name="Goodwin L."/>
            <person name="Pitluck S."/>
            <person name="Kiss H."/>
            <person name="Brettin T."/>
            <person name="Detter J.C."/>
            <person name="Han C."/>
            <person name="Kuske C.R."/>
            <person name="Schmutz J."/>
            <person name="Larimer F."/>
            <person name="Land M."/>
            <person name="Hauser L."/>
            <person name="Kyrpides N."/>
            <person name="Lykidis A."/>
            <person name="Lovley D."/>
            <person name="Richardson P."/>
        </authorList>
    </citation>
    <scope>NUCLEOTIDE SEQUENCE [LARGE SCALE GENOMIC DNA]</scope>
    <source>
        <strain>ATCC BAA-1014 / DSM 16622 / JCM 12645 / Bem</strain>
    </source>
</reference>
<feature type="chain" id="PRO_1000201298" description="tRNA U34 carboxymethyltransferase">
    <location>
        <begin position="1"/>
        <end position="323"/>
    </location>
</feature>
<feature type="binding site" evidence="1">
    <location>
        <position position="91"/>
    </location>
    <ligand>
        <name>carboxy-S-adenosyl-L-methionine</name>
        <dbReference type="ChEBI" id="CHEBI:134278"/>
    </ligand>
</feature>
<feature type="binding site" evidence="1">
    <location>
        <position position="105"/>
    </location>
    <ligand>
        <name>carboxy-S-adenosyl-L-methionine</name>
        <dbReference type="ChEBI" id="CHEBI:134278"/>
    </ligand>
</feature>
<feature type="binding site" evidence="1">
    <location>
        <position position="110"/>
    </location>
    <ligand>
        <name>carboxy-S-adenosyl-L-methionine</name>
        <dbReference type="ChEBI" id="CHEBI:134278"/>
    </ligand>
</feature>
<feature type="binding site" evidence="1">
    <location>
        <position position="130"/>
    </location>
    <ligand>
        <name>carboxy-S-adenosyl-L-methionine</name>
        <dbReference type="ChEBI" id="CHEBI:134278"/>
    </ligand>
</feature>
<feature type="binding site" evidence="1">
    <location>
        <begin position="180"/>
        <end position="181"/>
    </location>
    <ligand>
        <name>carboxy-S-adenosyl-L-methionine</name>
        <dbReference type="ChEBI" id="CHEBI:134278"/>
    </ligand>
</feature>
<feature type="binding site" evidence="1">
    <location>
        <position position="196"/>
    </location>
    <ligand>
        <name>carboxy-S-adenosyl-L-methionine</name>
        <dbReference type="ChEBI" id="CHEBI:134278"/>
    </ligand>
</feature>
<feature type="binding site" evidence="1">
    <location>
        <position position="200"/>
    </location>
    <ligand>
        <name>carboxy-S-adenosyl-L-methionine</name>
        <dbReference type="ChEBI" id="CHEBI:134278"/>
    </ligand>
</feature>
<feature type="binding site" evidence="1">
    <location>
        <position position="315"/>
    </location>
    <ligand>
        <name>carboxy-S-adenosyl-L-methionine</name>
        <dbReference type="ChEBI" id="CHEBI:134278"/>
    </ligand>
</feature>
<evidence type="ECO:0000255" key="1">
    <source>
        <dbReference type="HAMAP-Rule" id="MF_01590"/>
    </source>
</evidence>
<protein>
    <recommendedName>
        <fullName evidence="1">tRNA U34 carboxymethyltransferase</fullName>
        <ecNumber evidence="1">2.5.1.-</ecNumber>
    </recommendedName>
</protein>